<organism>
    <name type="scientific">Thermotoga maritima (strain ATCC 43589 / DSM 3109 / JCM 10099 / NBRC 100826 / MSB8)</name>
    <dbReference type="NCBI Taxonomy" id="243274"/>
    <lineage>
        <taxon>Bacteria</taxon>
        <taxon>Thermotogati</taxon>
        <taxon>Thermotogota</taxon>
        <taxon>Thermotogae</taxon>
        <taxon>Thermotogales</taxon>
        <taxon>Thermotogaceae</taxon>
        <taxon>Thermotoga</taxon>
    </lineage>
</organism>
<sequence>MARYFPVQKTTMIKPEEVERKWYVVDASGKVLGRLATRIAKILMGKHKPNYTPHVDTGDYVIVVNADKVVLTGKKLDQKVYYWHSGYPGGLKSLTARQMLEKHPERLIWLAVKRMLPKNRKGRKMLKRLKVYASPEHPHQAQKPEPIEL</sequence>
<comment type="function">
    <text evidence="1">This protein is one of the early assembly proteins of the 50S ribosomal subunit, although it is not seen to bind rRNA by itself. It is important during the early stages of 50S assembly.</text>
</comment>
<comment type="subunit">
    <text evidence="1">Part of the 50S ribosomal subunit.</text>
</comment>
<comment type="similarity">
    <text evidence="1">Belongs to the universal ribosomal protein uL13 family.</text>
</comment>
<reference key="1">
    <citation type="journal article" date="1999" name="Nature">
        <title>Evidence for lateral gene transfer between Archaea and Bacteria from genome sequence of Thermotoga maritima.</title>
        <authorList>
            <person name="Nelson K.E."/>
            <person name="Clayton R.A."/>
            <person name="Gill S.R."/>
            <person name="Gwinn M.L."/>
            <person name="Dodson R.J."/>
            <person name="Haft D.H."/>
            <person name="Hickey E.K."/>
            <person name="Peterson J.D."/>
            <person name="Nelson W.C."/>
            <person name="Ketchum K.A."/>
            <person name="McDonald L.A."/>
            <person name="Utterback T.R."/>
            <person name="Malek J.A."/>
            <person name="Linher K.D."/>
            <person name="Garrett M.M."/>
            <person name="Stewart A.M."/>
            <person name="Cotton M.D."/>
            <person name="Pratt M.S."/>
            <person name="Phillips C.A."/>
            <person name="Richardson D.L."/>
            <person name="Heidelberg J.F."/>
            <person name="Sutton G.G."/>
            <person name="Fleischmann R.D."/>
            <person name="Eisen J.A."/>
            <person name="White O."/>
            <person name="Salzberg S.L."/>
            <person name="Smith H.O."/>
            <person name="Venter J.C."/>
            <person name="Fraser C.M."/>
        </authorList>
    </citation>
    <scope>NUCLEOTIDE SEQUENCE [LARGE SCALE GENOMIC DNA]</scope>
    <source>
        <strain>ATCC 43589 / DSM 3109 / JCM 10099 / NBRC 100826 / MSB8</strain>
    </source>
</reference>
<keyword id="KW-1185">Reference proteome</keyword>
<keyword id="KW-0687">Ribonucleoprotein</keyword>
<keyword id="KW-0689">Ribosomal protein</keyword>
<evidence type="ECO:0000255" key="1">
    <source>
        <dbReference type="HAMAP-Rule" id="MF_01366"/>
    </source>
</evidence>
<evidence type="ECO:0000305" key="2"/>
<name>RL13_THEMA</name>
<feature type="chain" id="PRO_0000133753" description="Large ribosomal subunit protein uL13">
    <location>
        <begin position="1"/>
        <end position="149"/>
    </location>
</feature>
<gene>
    <name evidence="1" type="primary">rplM</name>
    <name type="ordered locus">TM_1454</name>
</gene>
<protein>
    <recommendedName>
        <fullName evidence="1">Large ribosomal subunit protein uL13</fullName>
    </recommendedName>
    <alternativeName>
        <fullName evidence="2">50S ribosomal protein L13</fullName>
    </alternativeName>
</protein>
<dbReference type="EMBL" id="AE000512">
    <property type="protein sequence ID" value="AAD36522.1"/>
    <property type="molecule type" value="Genomic_DNA"/>
</dbReference>
<dbReference type="PIR" id="G72250">
    <property type="entry name" value="G72250"/>
</dbReference>
<dbReference type="RefSeq" id="NP_229253.1">
    <property type="nucleotide sequence ID" value="NC_000853.1"/>
</dbReference>
<dbReference type="RefSeq" id="WP_004081738.1">
    <property type="nucleotide sequence ID" value="NZ_CP011107.1"/>
</dbReference>
<dbReference type="SMR" id="Q9X1G5"/>
<dbReference type="FunCoup" id="Q9X1G5">
    <property type="interactions" value="406"/>
</dbReference>
<dbReference type="STRING" id="243274.TM_1454"/>
<dbReference type="PaxDb" id="243274-THEMA_07045"/>
<dbReference type="EnsemblBacteria" id="AAD36522">
    <property type="protein sequence ID" value="AAD36522"/>
    <property type="gene ID" value="TM_1454"/>
</dbReference>
<dbReference type="KEGG" id="tma:TM1454"/>
<dbReference type="KEGG" id="tmi:THEMA_07045"/>
<dbReference type="KEGG" id="tmm:Tmari_1460"/>
<dbReference type="KEGG" id="tmw:THMA_1484"/>
<dbReference type="eggNOG" id="COG0102">
    <property type="taxonomic scope" value="Bacteria"/>
</dbReference>
<dbReference type="InParanoid" id="Q9X1G5"/>
<dbReference type="OrthoDB" id="9801330at2"/>
<dbReference type="Proteomes" id="UP000008183">
    <property type="component" value="Chromosome"/>
</dbReference>
<dbReference type="GO" id="GO:0022625">
    <property type="term" value="C:cytosolic large ribosomal subunit"/>
    <property type="evidence" value="ECO:0000318"/>
    <property type="project" value="GO_Central"/>
</dbReference>
<dbReference type="GO" id="GO:0005840">
    <property type="term" value="C:ribosome"/>
    <property type="evidence" value="ECO:0000318"/>
    <property type="project" value="GO_Central"/>
</dbReference>
<dbReference type="GO" id="GO:0003729">
    <property type="term" value="F:mRNA binding"/>
    <property type="evidence" value="ECO:0000318"/>
    <property type="project" value="GO_Central"/>
</dbReference>
<dbReference type="GO" id="GO:0003735">
    <property type="term" value="F:structural constituent of ribosome"/>
    <property type="evidence" value="ECO:0000318"/>
    <property type="project" value="GO_Central"/>
</dbReference>
<dbReference type="GO" id="GO:0017148">
    <property type="term" value="P:negative regulation of translation"/>
    <property type="evidence" value="ECO:0000318"/>
    <property type="project" value="GO_Central"/>
</dbReference>
<dbReference type="GO" id="GO:0006412">
    <property type="term" value="P:translation"/>
    <property type="evidence" value="ECO:0007669"/>
    <property type="project" value="UniProtKB-UniRule"/>
</dbReference>
<dbReference type="CDD" id="cd00392">
    <property type="entry name" value="Ribosomal_L13"/>
    <property type="match status" value="1"/>
</dbReference>
<dbReference type="FunFam" id="3.90.1180.10:FF:000001">
    <property type="entry name" value="50S ribosomal protein L13"/>
    <property type="match status" value="1"/>
</dbReference>
<dbReference type="Gene3D" id="3.90.1180.10">
    <property type="entry name" value="Ribosomal protein L13"/>
    <property type="match status" value="1"/>
</dbReference>
<dbReference type="HAMAP" id="MF_01366">
    <property type="entry name" value="Ribosomal_uL13"/>
    <property type="match status" value="1"/>
</dbReference>
<dbReference type="InterPro" id="IPR005822">
    <property type="entry name" value="Ribosomal_uL13"/>
</dbReference>
<dbReference type="InterPro" id="IPR005823">
    <property type="entry name" value="Ribosomal_uL13_bac-type"/>
</dbReference>
<dbReference type="InterPro" id="IPR023563">
    <property type="entry name" value="Ribosomal_uL13_CS"/>
</dbReference>
<dbReference type="InterPro" id="IPR036899">
    <property type="entry name" value="Ribosomal_uL13_sf"/>
</dbReference>
<dbReference type="NCBIfam" id="TIGR01066">
    <property type="entry name" value="rplM_bact"/>
    <property type="match status" value="1"/>
</dbReference>
<dbReference type="PANTHER" id="PTHR11545:SF2">
    <property type="entry name" value="LARGE RIBOSOMAL SUBUNIT PROTEIN UL13M"/>
    <property type="match status" value="1"/>
</dbReference>
<dbReference type="PANTHER" id="PTHR11545">
    <property type="entry name" value="RIBOSOMAL PROTEIN L13"/>
    <property type="match status" value="1"/>
</dbReference>
<dbReference type="Pfam" id="PF00572">
    <property type="entry name" value="Ribosomal_L13"/>
    <property type="match status" value="1"/>
</dbReference>
<dbReference type="PIRSF" id="PIRSF002181">
    <property type="entry name" value="Ribosomal_L13"/>
    <property type="match status" value="1"/>
</dbReference>
<dbReference type="SUPFAM" id="SSF52161">
    <property type="entry name" value="Ribosomal protein L13"/>
    <property type="match status" value="1"/>
</dbReference>
<dbReference type="PROSITE" id="PS00783">
    <property type="entry name" value="RIBOSOMAL_L13"/>
    <property type="match status" value="1"/>
</dbReference>
<proteinExistence type="inferred from homology"/>
<accession>Q9X1G5</accession>